<name>PSBD_BPSYR</name>
<proteinExistence type="inferred from homology"/>
<organism>
    <name type="scientific">Synechococcus phage S-RSM2</name>
    <dbReference type="NCBI Taxonomy" id="264653"/>
    <lineage>
        <taxon>Viruses</taxon>
        <taxon>Duplodnaviria</taxon>
        <taxon>Heunggongvirae</taxon>
        <taxon>Uroviricota</taxon>
        <taxon>Caudoviricetes</taxon>
    </lineage>
</organism>
<protein>
    <recommendedName>
        <fullName>Photosystem II D2 protein</fullName>
        <shortName>PSII D2 protein</shortName>
        <ecNumber>1.10.3.9</ecNumber>
    </recommendedName>
    <alternativeName>
        <fullName>Photosystem Q(A) protein</fullName>
    </alternativeName>
</protein>
<evidence type="ECO:0000250" key="1">
    <source>
        <dbReference type="UniProtKB" id="D0VWR8"/>
    </source>
</evidence>
<evidence type="ECO:0000305" key="2"/>
<dbReference type="EC" id="1.10.3.9"/>
<dbReference type="EMBL" id="AJ628768">
    <property type="protein sequence ID" value="CAF32256.1"/>
    <property type="molecule type" value="Genomic_DNA"/>
</dbReference>
<dbReference type="SMR" id="Q6H956"/>
<dbReference type="GO" id="GO:0044160">
    <property type="term" value="C:host thylakoid membrane"/>
    <property type="evidence" value="ECO:0007669"/>
    <property type="project" value="UniProtKB-SubCell"/>
</dbReference>
<dbReference type="GO" id="GO:0016020">
    <property type="term" value="C:membrane"/>
    <property type="evidence" value="ECO:0007669"/>
    <property type="project" value="UniProtKB-KW"/>
</dbReference>
<dbReference type="GO" id="GO:0016168">
    <property type="term" value="F:chlorophyll binding"/>
    <property type="evidence" value="ECO:0007669"/>
    <property type="project" value="UniProtKB-KW"/>
</dbReference>
<dbReference type="GO" id="GO:0045156">
    <property type="term" value="F:electron transporter, transferring electrons within the cyclic electron transport pathway of photosynthesis activity"/>
    <property type="evidence" value="ECO:0007669"/>
    <property type="project" value="InterPro"/>
</dbReference>
<dbReference type="GO" id="GO:0046872">
    <property type="term" value="F:metal ion binding"/>
    <property type="evidence" value="ECO:0007669"/>
    <property type="project" value="UniProtKB-KW"/>
</dbReference>
<dbReference type="GO" id="GO:0016491">
    <property type="term" value="F:oxidoreductase activity"/>
    <property type="evidence" value="ECO:0007669"/>
    <property type="project" value="UniProtKB-KW"/>
</dbReference>
<dbReference type="GO" id="GO:0009772">
    <property type="term" value="P:photosynthetic electron transport in photosystem II"/>
    <property type="evidence" value="ECO:0007669"/>
    <property type="project" value="InterPro"/>
</dbReference>
<dbReference type="Gene3D" id="1.20.85.10">
    <property type="entry name" value="Photosystem II protein D1-like"/>
    <property type="match status" value="1"/>
</dbReference>
<dbReference type="HAMAP" id="MF_01383">
    <property type="entry name" value="PSII_PsbD_D2"/>
    <property type="match status" value="1"/>
</dbReference>
<dbReference type="InterPro" id="IPR055266">
    <property type="entry name" value="D1/D2"/>
</dbReference>
<dbReference type="InterPro" id="IPR036854">
    <property type="entry name" value="Photo_II_D1/D2_sf"/>
</dbReference>
<dbReference type="InterPro" id="IPR000484">
    <property type="entry name" value="Photo_RC_L/M"/>
</dbReference>
<dbReference type="InterPro" id="IPR005868">
    <property type="entry name" value="PSII_PsbD/D2"/>
</dbReference>
<dbReference type="NCBIfam" id="TIGR01152">
    <property type="entry name" value="psbD"/>
    <property type="match status" value="1"/>
</dbReference>
<dbReference type="PANTHER" id="PTHR33149:SF12">
    <property type="entry name" value="PHOTOSYSTEM II D2 PROTEIN"/>
    <property type="match status" value="1"/>
</dbReference>
<dbReference type="PANTHER" id="PTHR33149">
    <property type="entry name" value="PHOTOSYSTEM II PROTEIN D1"/>
    <property type="match status" value="1"/>
</dbReference>
<dbReference type="Pfam" id="PF00124">
    <property type="entry name" value="Photo_RC"/>
    <property type="match status" value="1"/>
</dbReference>
<dbReference type="PRINTS" id="PR00256">
    <property type="entry name" value="REACTNCENTRE"/>
</dbReference>
<dbReference type="SUPFAM" id="SSF81483">
    <property type="entry name" value="Bacterial photosystem II reaction centre, L and M subunits"/>
    <property type="match status" value="1"/>
</dbReference>
<sequence length="351" mass="39351">MVASNLTLQQRGWFDVLDDWLKRDRFVFVGWSGLLLFPTAYLAIGGWLTGTTFVTSWYTHGLASSYLEGANFLTAAVSTPADAMGHSLLLLWGPEAQGDFIRWCQLGGLWAFVALHGAFALIGFMLRQFELARLIGIRPYNAIAFSGPIAVFVSVFLIYPLGQSSWFFAPSFGVAAIFRFLLFLQGFHNWTLNPFHMMGVAGILGGALLSAIHGVTVENTLYQDGEQANTFKAFDSTQEEETYSMVTANRFWSQIFGIAFSNKRWLHFFMLFVPVMGLWTSSIGIIGLALNLRAYDFVSQEIRASEDPEFETFYTKNILLNEGLRAWLAPVDQPHENFVFPEEVLPRGNAL</sequence>
<reference key="1">
    <citation type="journal article" date="2004" name="Proc. Natl. Acad. Sci. U.S.A.">
        <title>Genetic organization of the psbAD region in phages infecting marine Synechococcus strains.</title>
        <authorList>
            <person name="Millard A."/>
            <person name="Clokie M.R."/>
            <person name="Shub D.A."/>
            <person name="Mann N.H."/>
        </authorList>
    </citation>
    <scope>NUCLEOTIDE SEQUENCE [GENOMIC DNA]</scope>
</reference>
<accession>Q6H956</accession>
<keyword id="KW-0148">Chlorophyll</keyword>
<keyword id="KW-0157">Chromophore</keyword>
<keyword id="KW-0249">Electron transport</keyword>
<keyword id="KW-1043">Host membrane</keyword>
<keyword id="KW-1050">Host thylakoid</keyword>
<keyword id="KW-0408">Iron</keyword>
<keyword id="KW-0460">Magnesium</keyword>
<keyword id="KW-0472">Membrane</keyword>
<keyword id="KW-0479">Metal-binding</keyword>
<keyword id="KW-0560">Oxidoreductase</keyword>
<keyword id="KW-0602">Photosynthesis</keyword>
<keyword id="KW-0604">Photosystem II</keyword>
<keyword id="KW-0812">Transmembrane</keyword>
<keyword id="KW-1133">Transmembrane helix</keyword>
<keyword id="KW-0813">Transport</keyword>
<feature type="chain" id="PRO_0000359711" description="Photosystem II D2 protein">
    <location>
        <begin position="1"/>
        <end position="351"/>
    </location>
</feature>
<feature type="transmembrane region" description="Helical" evidence="1">
    <location>
        <begin position="39"/>
        <end position="59"/>
    </location>
</feature>
<feature type="transmembrane region" description="Helical" evidence="1">
    <location>
        <begin position="123"/>
        <end position="139"/>
    </location>
</feature>
<feature type="transmembrane region" description="Helical" evidence="1">
    <location>
        <begin position="151"/>
        <end position="164"/>
    </location>
</feature>
<feature type="transmembrane region" description="Helical" evidence="1">
    <location>
        <begin position="206"/>
        <end position="226"/>
    </location>
</feature>
<feature type="transmembrane region" description="Helical" evidence="1">
    <location>
        <begin position="277"/>
        <end position="293"/>
    </location>
</feature>
<feature type="binding site" description="axial binding residue" evidence="1">
    <location>
        <position position="116"/>
    </location>
    <ligand>
        <name>chlorophyll a</name>
        <dbReference type="ChEBI" id="CHEBI:58416"/>
        <label>ChlzD2</label>
    </ligand>
    <ligandPart>
        <name>Mg</name>
        <dbReference type="ChEBI" id="CHEBI:25107"/>
    </ligandPart>
</feature>
<feature type="binding site" evidence="1">
    <location>
        <position position="128"/>
    </location>
    <ligand>
        <name>pheophytin a</name>
        <dbReference type="ChEBI" id="CHEBI:136840"/>
        <label>D2</label>
    </ligand>
</feature>
<feature type="binding site" evidence="1">
    <location>
        <position position="141"/>
    </location>
    <ligand>
        <name>pheophytin a</name>
        <dbReference type="ChEBI" id="CHEBI:136840"/>
        <label>D2</label>
    </ligand>
</feature>
<feature type="binding site" description="axial binding residue" evidence="1">
    <location>
        <position position="196"/>
    </location>
    <ligand>
        <name>chlorophyll a</name>
        <dbReference type="ChEBI" id="CHEBI:58416"/>
        <label>PD2</label>
    </ligand>
    <ligandPart>
        <name>Mg</name>
        <dbReference type="ChEBI" id="CHEBI:25107"/>
    </ligandPart>
</feature>
<feature type="binding site" evidence="1">
    <location>
        <position position="213"/>
    </location>
    <ligand>
        <name>a plastoquinone</name>
        <dbReference type="ChEBI" id="CHEBI:17757"/>
        <label>Q(A)</label>
    </ligand>
</feature>
<feature type="binding site" evidence="1">
    <location>
        <position position="213"/>
    </location>
    <ligand>
        <name>Fe cation</name>
        <dbReference type="ChEBI" id="CHEBI:24875"/>
        <note>ligand shared with heterodimeric partner</note>
    </ligand>
</feature>
<feature type="binding site" evidence="1">
    <location>
        <position position="260"/>
    </location>
    <ligand>
        <name>a plastoquinone</name>
        <dbReference type="ChEBI" id="CHEBI:17757"/>
        <label>Q(A)</label>
    </ligand>
</feature>
<feature type="binding site" evidence="1">
    <location>
        <position position="267"/>
    </location>
    <ligand>
        <name>Fe cation</name>
        <dbReference type="ChEBI" id="CHEBI:24875"/>
        <note>ligand shared with heterodimeric partner</note>
    </ligand>
</feature>
<comment type="function">
    <text evidence="1">Photosystem II (PSII) is a light-driven water:plastoquinone oxidoreductase that uses light energy to abstract electrons from H(2)O, generating O(2) and a proton gradient subsequently used for ATP formation. It consists of a core antenna complex that captures photons, and an electron transfer chain that converts photonic excitation into a charge separation. The D1/D2 (PsbA/PsbD) reaction center heterodimer binds P680, the primary electron donor of PSII as well as several subsequent electron acceptors. D2 is needed for assembly of a stable PSII complex.</text>
</comment>
<comment type="catalytic activity">
    <reaction evidence="1">
        <text>2 a plastoquinone + 4 hnu + 2 H2O = 2 a plastoquinol + O2</text>
        <dbReference type="Rhea" id="RHEA:36359"/>
        <dbReference type="Rhea" id="RHEA-COMP:9561"/>
        <dbReference type="Rhea" id="RHEA-COMP:9562"/>
        <dbReference type="ChEBI" id="CHEBI:15377"/>
        <dbReference type="ChEBI" id="CHEBI:15379"/>
        <dbReference type="ChEBI" id="CHEBI:17757"/>
        <dbReference type="ChEBI" id="CHEBI:30212"/>
        <dbReference type="ChEBI" id="CHEBI:62192"/>
        <dbReference type="EC" id="1.10.3.9"/>
    </reaction>
</comment>
<comment type="cofactor">
    <text evidence="1">The D1/D2 heterodimer binds P680, chlorophylls that are the primary electron donor of PSII, and subsequent electron acceptors. It shares a non-heme iron and each subunit binds pheophytin, quinone, additional chlorophylls, carotenoids and lipids. There is also a Cl(-1) ion associated with D1 and D2, which is required for oxygen evolution. The PSII complex binds additional chlorophylls, carotenoids and specific lipids.</text>
</comment>
<comment type="subunit">
    <text evidence="1">PSII is composed of 1 copy each of membrane proteins PsbA, PsbB, PsbC, PsbD, PsbE, PsbF, PsbH, PsbI, PsbJ, PsbK, PsbL, PsbM, PsbT, PsbX, PsbY, PsbZ, Psb30/Ycf12, peripheral proteins PsbO, CyanoQ (PsbQ), PsbU, PsbV and a large number of cofactors. It forms dimeric complexes.</text>
</comment>
<comment type="subcellular location">
    <subcellularLocation>
        <location evidence="2">Host cellular thylakoid membrane</location>
        <topology evidence="2">Multi-pass membrane protein</topology>
    </subcellularLocation>
</comment>
<comment type="similarity">
    <text evidence="1">Belongs to the reaction center PufL/M/PsbA/D family.</text>
</comment>
<organismHost>
    <name type="scientific">Synechococcus</name>
    <dbReference type="NCBI Taxonomy" id="1129"/>
</organismHost>
<gene>
    <name type="primary">psbD</name>
</gene>